<name>SYC_CAMJ8</name>
<protein>
    <recommendedName>
        <fullName evidence="1">Cysteine--tRNA ligase</fullName>
        <ecNumber evidence="1">6.1.1.16</ecNumber>
    </recommendedName>
    <alternativeName>
        <fullName evidence="1">Cysteinyl-tRNA synthetase</fullName>
        <shortName evidence="1">CysRS</shortName>
    </alternativeName>
</protein>
<feature type="chain" id="PRO_1000071070" description="Cysteine--tRNA ligase">
    <location>
        <begin position="1"/>
        <end position="462"/>
    </location>
</feature>
<feature type="short sequence motif" description="'HIGH' region">
    <location>
        <begin position="26"/>
        <end position="36"/>
    </location>
</feature>
<feature type="short sequence motif" description="'KMSKS' region">
    <location>
        <begin position="256"/>
        <end position="260"/>
    </location>
</feature>
<feature type="binding site" evidence="1">
    <location>
        <position position="24"/>
    </location>
    <ligand>
        <name>Zn(2+)</name>
        <dbReference type="ChEBI" id="CHEBI:29105"/>
    </ligand>
</feature>
<feature type="binding site" evidence="1">
    <location>
        <position position="199"/>
    </location>
    <ligand>
        <name>Zn(2+)</name>
        <dbReference type="ChEBI" id="CHEBI:29105"/>
    </ligand>
</feature>
<feature type="binding site" evidence="1">
    <location>
        <position position="224"/>
    </location>
    <ligand>
        <name>Zn(2+)</name>
        <dbReference type="ChEBI" id="CHEBI:29105"/>
    </ligand>
</feature>
<feature type="binding site" evidence="1">
    <location>
        <position position="228"/>
    </location>
    <ligand>
        <name>Zn(2+)</name>
        <dbReference type="ChEBI" id="CHEBI:29105"/>
    </ligand>
</feature>
<feature type="binding site" evidence="1">
    <location>
        <position position="259"/>
    </location>
    <ligand>
        <name>ATP</name>
        <dbReference type="ChEBI" id="CHEBI:30616"/>
    </ligand>
</feature>
<gene>
    <name evidence="1" type="primary">cysS</name>
    <name type="ordered locus">C8J_0753</name>
</gene>
<comment type="catalytic activity">
    <reaction evidence="1">
        <text>tRNA(Cys) + L-cysteine + ATP = L-cysteinyl-tRNA(Cys) + AMP + diphosphate</text>
        <dbReference type="Rhea" id="RHEA:17773"/>
        <dbReference type="Rhea" id="RHEA-COMP:9661"/>
        <dbReference type="Rhea" id="RHEA-COMP:9679"/>
        <dbReference type="ChEBI" id="CHEBI:30616"/>
        <dbReference type="ChEBI" id="CHEBI:33019"/>
        <dbReference type="ChEBI" id="CHEBI:35235"/>
        <dbReference type="ChEBI" id="CHEBI:78442"/>
        <dbReference type="ChEBI" id="CHEBI:78517"/>
        <dbReference type="ChEBI" id="CHEBI:456215"/>
        <dbReference type="EC" id="6.1.1.16"/>
    </reaction>
</comment>
<comment type="cofactor">
    <cofactor evidence="1">
        <name>Zn(2+)</name>
        <dbReference type="ChEBI" id="CHEBI:29105"/>
    </cofactor>
    <text evidence="1">Binds 1 zinc ion per subunit.</text>
</comment>
<comment type="subunit">
    <text evidence="1">Monomer.</text>
</comment>
<comment type="subcellular location">
    <subcellularLocation>
        <location evidence="1">Cytoplasm</location>
    </subcellularLocation>
</comment>
<comment type="similarity">
    <text evidence="1">Belongs to the class-I aminoacyl-tRNA synthetase family.</text>
</comment>
<organism>
    <name type="scientific">Campylobacter jejuni subsp. jejuni serotype O:6 (strain 81116 / NCTC 11828)</name>
    <dbReference type="NCBI Taxonomy" id="407148"/>
    <lineage>
        <taxon>Bacteria</taxon>
        <taxon>Pseudomonadati</taxon>
        <taxon>Campylobacterota</taxon>
        <taxon>Epsilonproteobacteria</taxon>
        <taxon>Campylobacterales</taxon>
        <taxon>Campylobacteraceae</taxon>
        <taxon>Campylobacter</taxon>
    </lineage>
</organism>
<evidence type="ECO:0000255" key="1">
    <source>
        <dbReference type="HAMAP-Rule" id="MF_00041"/>
    </source>
</evidence>
<sequence length="462" mass="53586">MRLLDSVAKEKIKLDKKDISIYLCGPTVYDDAHLGHARSSVCFDLLRRVLLANGNRVKFARNYTDIDDKILKKMAQSGQTLEEITEFYIKSYEEDMRVLNVLDPDFKPRATHYITAMLDLIKKLAKDGFVYTLEDGIYFDTSKDEKYLSLSNRNLEENISRLSNEVQKRNESDFVLWKFDENFYESEFGKGRPGWHTECVAMIDSIFENTLDIHAGGIDLLFPHHENEAAQCRCGCKRKLANIWLHNGFVKIDGEKMSKSLNNSFFIKDALKEFMGEALRFYLLSSHYRSHFNYSLSDLENAKKRLDKFYRLKKRLDLGEISDFDVLNDIEIKSEIAKQILEILNDDLNISKALALLDDFISSANLELDKESKNKILKQNIKEALSELAKIFGFGFMDTTLYFQWGVSKEEREEIEKLILERTEAKKNKDFNTADAIRERLSSKKITLLDTPNGTIWEKINA</sequence>
<accession>A8FLL5</accession>
<keyword id="KW-0030">Aminoacyl-tRNA synthetase</keyword>
<keyword id="KW-0067">ATP-binding</keyword>
<keyword id="KW-0963">Cytoplasm</keyword>
<keyword id="KW-0436">Ligase</keyword>
<keyword id="KW-0479">Metal-binding</keyword>
<keyword id="KW-0547">Nucleotide-binding</keyword>
<keyword id="KW-0648">Protein biosynthesis</keyword>
<keyword id="KW-0862">Zinc</keyword>
<proteinExistence type="inferred from homology"/>
<dbReference type="EC" id="6.1.1.16" evidence="1"/>
<dbReference type="EMBL" id="CP000814">
    <property type="protein sequence ID" value="ABV52352.1"/>
    <property type="molecule type" value="Genomic_DNA"/>
</dbReference>
<dbReference type="RefSeq" id="WP_002865979.1">
    <property type="nucleotide sequence ID" value="NC_009839.1"/>
</dbReference>
<dbReference type="SMR" id="A8FLL5"/>
<dbReference type="KEGG" id="cju:C8J_0753"/>
<dbReference type="HOGENOM" id="CLU_013528_0_1_7"/>
<dbReference type="GO" id="GO:0005829">
    <property type="term" value="C:cytosol"/>
    <property type="evidence" value="ECO:0007669"/>
    <property type="project" value="TreeGrafter"/>
</dbReference>
<dbReference type="GO" id="GO:0005524">
    <property type="term" value="F:ATP binding"/>
    <property type="evidence" value="ECO:0007669"/>
    <property type="project" value="UniProtKB-UniRule"/>
</dbReference>
<dbReference type="GO" id="GO:0004817">
    <property type="term" value="F:cysteine-tRNA ligase activity"/>
    <property type="evidence" value="ECO:0007669"/>
    <property type="project" value="UniProtKB-UniRule"/>
</dbReference>
<dbReference type="GO" id="GO:0008270">
    <property type="term" value="F:zinc ion binding"/>
    <property type="evidence" value="ECO:0007669"/>
    <property type="project" value="UniProtKB-UniRule"/>
</dbReference>
<dbReference type="GO" id="GO:0006423">
    <property type="term" value="P:cysteinyl-tRNA aminoacylation"/>
    <property type="evidence" value="ECO:0007669"/>
    <property type="project" value="UniProtKB-UniRule"/>
</dbReference>
<dbReference type="CDD" id="cd00672">
    <property type="entry name" value="CysRS_core"/>
    <property type="match status" value="1"/>
</dbReference>
<dbReference type="Gene3D" id="1.20.120.1910">
    <property type="entry name" value="Cysteine-tRNA ligase, C-terminal anti-codon recognition domain"/>
    <property type="match status" value="1"/>
</dbReference>
<dbReference type="Gene3D" id="3.40.50.620">
    <property type="entry name" value="HUPs"/>
    <property type="match status" value="1"/>
</dbReference>
<dbReference type="HAMAP" id="MF_00041">
    <property type="entry name" value="Cys_tRNA_synth"/>
    <property type="match status" value="1"/>
</dbReference>
<dbReference type="InterPro" id="IPR015803">
    <property type="entry name" value="Cys-tRNA-ligase"/>
</dbReference>
<dbReference type="InterPro" id="IPR015273">
    <property type="entry name" value="Cys-tRNA-synt_Ia_DALR"/>
</dbReference>
<dbReference type="InterPro" id="IPR024909">
    <property type="entry name" value="Cys-tRNA/MSH_ligase"/>
</dbReference>
<dbReference type="InterPro" id="IPR014729">
    <property type="entry name" value="Rossmann-like_a/b/a_fold"/>
</dbReference>
<dbReference type="InterPro" id="IPR032678">
    <property type="entry name" value="tRNA-synt_1_cat_dom"/>
</dbReference>
<dbReference type="InterPro" id="IPR009080">
    <property type="entry name" value="tRNAsynth_Ia_anticodon-bd"/>
</dbReference>
<dbReference type="NCBIfam" id="TIGR00435">
    <property type="entry name" value="cysS"/>
    <property type="match status" value="1"/>
</dbReference>
<dbReference type="PANTHER" id="PTHR10890:SF3">
    <property type="entry name" value="CYSTEINE--TRNA LIGASE, CYTOPLASMIC"/>
    <property type="match status" value="1"/>
</dbReference>
<dbReference type="PANTHER" id="PTHR10890">
    <property type="entry name" value="CYSTEINYL-TRNA SYNTHETASE"/>
    <property type="match status" value="1"/>
</dbReference>
<dbReference type="Pfam" id="PF09190">
    <property type="entry name" value="DALR_2"/>
    <property type="match status" value="1"/>
</dbReference>
<dbReference type="Pfam" id="PF01406">
    <property type="entry name" value="tRNA-synt_1e"/>
    <property type="match status" value="1"/>
</dbReference>
<dbReference type="PRINTS" id="PR00983">
    <property type="entry name" value="TRNASYNTHCYS"/>
</dbReference>
<dbReference type="SMART" id="SM00840">
    <property type="entry name" value="DALR_2"/>
    <property type="match status" value="1"/>
</dbReference>
<dbReference type="SUPFAM" id="SSF47323">
    <property type="entry name" value="Anticodon-binding domain of a subclass of class I aminoacyl-tRNA synthetases"/>
    <property type="match status" value="1"/>
</dbReference>
<dbReference type="SUPFAM" id="SSF52374">
    <property type="entry name" value="Nucleotidylyl transferase"/>
    <property type="match status" value="1"/>
</dbReference>
<reference key="1">
    <citation type="journal article" date="2007" name="J. Bacteriol.">
        <title>The complete genome sequence of Campylobacter jejuni strain 81116 (NCTC11828).</title>
        <authorList>
            <person name="Pearson B.M."/>
            <person name="Gaskin D.J.H."/>
            <person name="Segers R.P.A.M."/>
            <person name="Wells J.M."/>
            <person name="Nuijten P.J.M."/>
            <person name="van Vliet A.H.M."/>
        </authorList>
    </citation>
    <scope>NUCLEOTIDE SEQUENCE [LARGE SCALE GENOMIC DNA]</scope>
    <source>
        <strain>81116 / NCTC 11828</strain>
    </source>
</reference>